<comment type="function">
    <text evidence="1">Involved in the temperature-dependent positive control of flagellum-driven swimming motility and cellular aggregation. Regulates fliC expression by directly interacting with fliC promoter (By similarity).</text>
</comment>
<comment type="caution">
    <text evidence="3">Originally described as slyA, but then it was found that two distinct genes had been named slyA. This gene was renamed hosA. It is not present in strain K12.</text>
</comment>
<proteinExistence type="inferred from homology"/>
<feature type="chain" id="PRO_0000054355" description="Transcriptional regulator HosA">
    <location>
        <begin position="1"/>
        <end position="135"/>
    </location>
</feature>
<feature type="domain" description="HTH marR-type" evidence="2">
    <location>
        <begin position="4"/>
        <end position="134"/>
    </location>
</feature>
<feature type="DNA-binding region" description="H-T-H motif" evidence="2">
    <location>
        <begin position="48"/>
        <end position="71"/>
    </location>
</feature>
<feature type="sequence variant" description="In strain: DEC 9f.">
    <original>A</original>
    <variation>P</variation>
    <location>
        <position position="81"/>
    </location>
</feature>
<feature type="sequence variant" description="In strain: BJ4.">
    <original>A</original>
    <variation>S</variation>
    <location>
        <position position="81"/>
    </location>
</feature>
<feature type="sequence variant" description="In strain: DEC 9f.">
    <original>V</original>
    <variation>I</variation>
    <location>
        <position position="98"/>
    </location>
</feature>
<feature type="sequence variant" description="In strain: DEC 9f and BJ4.">
    <original>A</original>
    <variation>G</variation>
    <location>
        <position position="119"/>
    </location>
</feature>
<feature type="sequence variant" description="In strain: DEC 9f.">
    <original>E</original>
    <variation>K</variation>
    <location>
        <position position="121"/>
    </location>
</feature>
<feature type="sequence variant" description="In strain: DEC 9f and BJ4.">
    <original>T</original>
    <variation>A</variation>
    <location>
        <position position="135"/>
    </location>
</feature>
<organism>
    <name type="scientific">Escherichia coli</name>
    <dbReference type="NCBI Taxonomy" id="562"/>
    <lineage>
        <taxon>Bacteria</taxon>
        <taxon>Pseudomonadati</taxon>
        <taxon>Pseudomonadota</taxon>
        <taxon>Gammaproteobacteria</taxon>
        <taxon>Enterobacterales</taxon>
        <taxon>Enterobacteriaceae</taxon>
        <taxon>Escherichia</taxon>
    </lineage>
</organism>
<accession>Q93CC3</accession>
<accession>Q9EUB1</accession>
<accession>Q9F8R2</accession>
<keyword id="KW-0238">DNA-binding</keyword>
<keyword id="KW-0804">Transcription</keyword>
<keyword id="KW-0805">Transcription regulation</keyword>
<keyword id="KW-0843">Virulence</keyword>
<reference key="1">
    <citation type="journal article" date="2000" name="J. Bacteriol.">
        <title>Gene conservation and loss in the mutS-rpoS genomic region of pathogenic Escherichia coli.</title>
        <authorList>
            <person name="Herbelin C.J."/>
            <person name="Chirillo S.C."/>
            <person name="Melnick K.A."/>
            <person name="Whittam T.S."/>
        </authorList>
    </citation>
    <scope>NUCLEOTIDE SEQUENCE [GENOMIC DNA]</scope>
    <source>
        <strain>O26:NM / DEC 9f / EHEC</strain>
        <strain>O55:H6 / DEC 1a / EPEC</strain>
    </source>
</reference>
<reference key="2">
    <citation type="journal article" date="2002" name="Mol. Genet. Genomics">
        <title>Characterisation of the allelic variation in the rpoS gene in thirteen K12 and six other non-pathogenic Escherichia coli strains.</title>
        <authorList>
            <person name="Atlung T."/>
            <person name="Nielsen H.V."/>
            <person name="Hansen F.G."/>
        </authorList>
    </citation>
    <scope>NUCLEOTIDE SEQUENCE [GENOMIC DNA] OF 36-135</scope>
    <source>
        <strain>BJ4</strain>
    </source>
</reference>
<reference key="3">
    <citation type="journal article" date="2002" name="Trends Microbiol.">
        <title>Two different open reading frames named slyA in the E. coli sequence databases.</title>
        <authorList>
            <person name="Heroven A.K."/>
            <person name="Dersch P."/>
        </authorList>
    </citation>
    <scope>NOMENCLATURE</scope>
</reference>
<name>HOSA_ECOLX</name>
<gene>
    <name type="primary">hosA</name>
</gene>
<dbReference type="EMBL" id="AF242209">
    <property type="protein sequence ID" value="AAG14980.1"/>
    <property type="molecule type" value="Genomic_DNA"/>
</dbReference>
<dbReference type="EMBL" id="AF242210">
    <property type="protein sequence ID" value="AAG14987.1"/>
    <property type="molecule type" value="Genomic_DNA"/>
</dbReference>
<dbReference type="EMBL" id="AF410776">
    <property type="protein sequence ID" value="AAL01413.1"/>
    <property type="molecule type" value="Genomic_DNA"/>
</dbReference>
<dbReference type="RefSeq" id="WP_001208066.1">
    <property type="nucleotide sequence ID" value="NZ_WTRA01000012.1"/>
</dbReference>
<dbReference type="SMR" id="Q93CC3"/>
<dbReference type="STRING" id="585034.ECIAI1_2839"/>
<dbReference type="GO" id="GO:0003677">
    <property type="term" value="F:DNA binding"/>
    <property type="evidence" value="ECO:0007669"/>
    <property type="project" value="UniProtKB-KW"/>
</dbReference>
<dbReference type="GO" id="GO:0003700">
    <property type="term" value="F:DNA-binding transcription factor activity"/>
    <property type="evidence" value="ECO:0007669"/>
    <property type="project" value="InterPro"/>
</dbReference>
<dbReference type="Gene3D" id="1.10.10.10">
    <property type="entry name" value="Winged helix-like DNA-binding domain superfamily/Winged helix DNA-binding domain"/>
    <property type="match status" value="1"/>
</dbReference>
<dbReference type="InterPro" id="IPR000835">
    <property type="entry name" value="HTH_MarR-typ"/>
</dbReference>
<dbReference type="InterPro" id="IPR023187">
    <property type="entry name" value="Tscrpt_reg_MarR-type_CS"/>
</dbReference>
<dbReference type="InterPro" id="IPR036388">
    <property type="entry name" value="WH-like_DNA-bd_sf"/>
</dbReference>
<dbReference type="InterPro" id="IPR036390">
    <property type="entry name" value="WH_DNA-bd_sf"/>
</dbReference>
<dbReference type="PANTHER" id="PTHR42756">
    <property type="entry name" value="TRANSCRIPTIONAL REGULATOR, MARR"/>
    <property type="match status" value="1"/>
</dbReference>
<dbReference type="PANTHER" id="PTHR42756:SF1">
    <property type="entry name" value="TRANSCRIPTIONAL REPRESSOR OF EMRAB OPERON"/>
    <property type="match status" value="1"/>
</dbReference>
<dbReference type="Pfam" id="PF01047">
    <property type="entry name" value="MarR"/>
    <property type="match status" value="1"/>
</dbReference>
<dbReference type="PRINTS" id="PR00598">
    <property type="entry name" value="HTHMARR"/>
</dbReference>
<dbReference type="SMART" id="SM00347">
    <property type="entry name" value="HTH_MARR"/>
    <property type="match status" value="1"/>
</dbReference>
<dbReference type="SUPFAM" id="SSF46785">
    <property type="entry name" value="Winged helix' DNA-binding domain"/>
    <property type="match status" value="1"/>
</dbReference>
<dbReference type="PROSITE" id="PS01117">
    <property type="entry name" value="HTH_MARR_1"/>
    <property type="match status" value="1"/>
</dbReference>
<dbReference type="PROSITE" id="PS50995">
    <property type="entry name" value="HTH_MARR_2"/>
    <property type="match status" value="1"/>
</dbReference>
<protein>
    <recommendedName>
        <fullName>Transcriptional regulator HosA</fullName>
    </recommendedName>
</protein>
<sequence length="135" mass="15497">MALRNKAFHQLRQLFQQHTARWQHELPDLTKPQYAVMRAIADKPGIEQVALIEAAVSTKATLAEMLARMENRGLVRREHDAADKRRRFVWLTAEGEKVLAAAIPIGDSVDEEFLGRLSAEEQELFMQLVRKMMNT</sequence>
<evidence type="ECO:0000250" key="1"/>
<evidence type="ECO:0000255" key="2">
    <source>
        <dbReference type="PROSITE-ProRule" id="PRU00345"/>
    </source>
</evidence>
<evidence type="ECO:0000305" key="3"/>